<evidence type="ECO:0000250" key="1">
    <source>
        <dbReference type="UniProtKB" id="Q5W0B1"/>
    </source>
</evidence>
<evidence type="ECO:0000250" key="2">
    <source>
        <dbReference type="UniProtKB" id="Q8K2Y0"/>
    </source>
</evidence>
<evidence type="ECO:0000255" key="3"/>
<evidence type="ECO:0000255" key="4">
    <source>
        <dbReference type="PROSITE-ProRule" id="PRU00175"/>
    </source>
</evidence>
<evidence type="ECO:0000256" key="5">
    <source>
        <dbReference type="SAM" id="MobiDB-lite"/>
    </source>
</evidence>
<evidence type="ECO:0000305" key="6"/>
<feature type="chain" id="PRO_0000055878" description="ORC ubiquitin ligase 1">
    <location>
        <begin position="1"/>
        <end position="726"/>
    </location>
</feature>
<feature type="zinc finger region" description="RING-type; degenerate" evidence="4">
    <location>
        <begin position="18"/>
        <end position="56"/>
    </location>
</feature>
<feature type="region of interest" description="Disordered" evidence="5">
    <location>
        <begin position="274"/>
        <end position="335"/>
    </location>
</feature>
<feature type="region of interest" description="Disordered" evidence="5">
    <location>
        <begin position="687"/>
        <end position="726"/>
    </location>
</feature>
<feature type="coiled-coil region" evidence="3">
    <location>
        <begin position="87"/>
        <end position="129"/>
    </location>
</feature>
<feature type="coiled-coil region" evidence="3">
    <location>
        <begin position="155"/>
        <end position="270"/>
    </location>
</feature>
<feature type="compositionally biased region" description="Basic and acidic residues" evidence="5">
    <location>
        <begin position="280"/>
        <end position="290"/>
    </location>
</feature>
<feature type="compositionally biased region" description="Low complexity" evidence="5">
    <location>
        <begin position="300"/>
        <end position="320"/>
    </location>
</feature>
<feature type="compositionally biased region" description="Polar residues" evidence="5">
    <location>
        <begin position="321"/>
        <end position="334"/>
    </location>
</feature>
<feature type="compositionally biased region" description="Polar residues" evidence="5">
    <location>
        <begin position="702"/>
        <end position="726"/>
    </location>
</feature>
<feature type="modified residue" description="Phosphoserine" evidence="1">
    <location>
        <position position="210"/>
    </location>
</feature>
<feature type="modified residue" description="Phosphoserine" evidence="1">
    <location>
        <position position="526"/>
    </location>
</feature>
<feature type="modified residue" description="Phosphoserine" evidence="2">
    <location>
        <position position="553"/>
    </location>
</feature>
<feature type="modified residue" description="Phosphoserine" evidence="1">
    <location>
        <position position="561"/>
    </location>
</feature>
<feature type="modified residue" description="Phosphoserine" evidence="2">
    <location>
        <position position="568"/>
    </location>
</feature>
<feature type="modified residue" description="Phosphoserine" evidence="2">
    <location>
        <position position="570"/>
    </location>
</feature>
<feature type="modified residue" description="Phosphoserine" evidence="1">
    <location>
        <position position="719"/>
    </location>
</feature>
<feature type="modified residue" description="Phosphoserine" evidence="1">
    <location>
        <position position="721"/>
    </location>
</feature>
<keyword id="KW-0158">Chromosome</keyword>
<keyword id="KW-0175">Coiled coil</keyword>
<keyword id="KW-0479">Metal-binding</keyword>
<keyword id="KW-0597">Phosphoprotein</keyword>
<keyword id="KW-1185">Reference proteome</keyword>
<keyword id="KW-0808">Transferase</keyword>
<keyword id="KW-0832">Ubl conjugation</keyword>
<keyword id="KW-0833">Ubl conjugation pathway</keyword>
<keyword id="KW-0862">Zinc</keyword>
<keyword id="KW-0863">Zinc-finger</keyword>
<organism>
    <name type="scientific">Pongo abelii</name>
    <name type="common">Sumatran orangutan</name>
    <name type="synonym">Pongo pygmaeus abelii</name>
    <dbReference type="NCBI Taxonomy" id="9601"/>
    <lineage>
        <taxon>Eukaryota</taxon>
        <taxon>Metazoa</taxon>
        <taxon>Chordata</taxon>
        <taxon>Craniata</taxon>
        <taxon>Vertebrata</taxon>
        <taxon>Euteleostomi</taxon>
        <taxon>Mammalia</taxon>
        <taxon>Eutheria</taxon>
        <taxon>Euarchontoglires</taxon>
        <taxon>Primates</taxon>
        <taxon>Haplorrhini</taxon>
        <taxon>Catarrhini</taxon>
        <taxon>Hominidae</taxon>
        <taxon>Pongo</taxon>
    </lineage>
</organism>
<reference key="1">
    <citation type="submission" date="2004-11" db="EMBL/GenBank/DDBJ databases">
        <authorList>
            <consortium name="The German cDNA consortium"/>
        </authorList>
    </citation>
    <scope>NUCLEOTIDE SEQUENCE [LARGE SCALE MRNA]</scope>
    <source>
        <tissue>Kidney</tissue>
    </source>
</reference>
<sequence length="726" mass="81126">MAQTVQNVTLSLTLPITCHICLGKVRQPVICINNHVFCSICIDLWLKNNSQCPACRVPITPENPCKEIIGGTSESEPMLSHTVRKHLRKTRLELLHKEYEDEIDCLQKEVEELKSKNLSLESQIKTILDPLTLVQGNQNEDKHLVTDNPSKINPETVAEWKKKLRTANEIYEKVKDDVDKLKEANKKLKLENGGLVRENLRLKAEVDNRSPQKFGRFAVAALQSKVEQYERETSRLKKALERSDKYIEELESQVAQLKNSSEEKEAMNSICQTALPADGKGSKGSEEDVASKNQGDSARKQPSSSTSSSSHLAKPSSSRLCDTSSARQESTSKAELNCSKNKDLYQEQVEVMLDVTDTSMDTYLEREWGNKPSDCVPYKDEELYDLPAPCTPLSLSCLQLSTPENRESPVVQAGGSKKHSNHLRKLVFDDFCDSSNVSNKDSSEDDISRSENEKKSECFSSPKTAFWDCCSTSYAQNLDFESSEGNTIANSVGEISSKLSEKSGSCVSKRLNSIRSFEMNRTRTSSEASMDAAYLDKISELDSMMSESDNSKSPCNNGFKSLDLDGLSKSSQGSEFLEEPDKLEEKTELNLSKGSLTNDQLENGSEWKPTSFFLLSPSDQEMNEDFSLHSSSCPVTNEIKPPSCLFQTEFSQGILLSSSHRLFEDQRFGSSLFKMSSEMHSLHNHLQSPWSTSFVPEKRNKNVNQSTKRKIQSSLSNASPSKATKS</sequence>
<gene>
    <name type="primary">OBI1</name>
    <name type="synonym">RNF219</name>
</gene>
<protein>
    <recommendedName>
        <fullName evidence="6">ORC ubiquitin ligase 1</fullName>
        <shortName>OBI1</shortName>
        <ecNumber evidence="1">2.3.2.27</ecNumber>
    </recommendedName>
    <alternativeName>
        <fullName>RING finger protein 219</fullName>
    </alternativeName>
</protein>
<dbReference type="EC" id="2.3.2.27" evidence="1"/>
<dbReference type="EMBL" id="CR858019">
    <property type="protein sequence ID" value="CAH90260.1"/>
    <property type="molecule type" value="mRNA"/>
</dbReference>
<dbReference type="RefSeq" id="NP_001125115.1">
    <property type="nucleotide sequence ID" value="NM_001131643.1"/>
</dbReference>
<dbReference type="SMR" id="Q5RD97"/>
<dbReference type="FunCoup" id="Q5RD97">
    <property type="interactions" value="1033"/>
</dbReference>
<dbReference type="STRING" id="9601.ENSPPYP00000006186"/>
<dbReference type="GeneID" id="100171997"/>
<dbReference type="KEGG" id="pon:100171997"/>
<dbReference type="CTD" id="79596"/>
<dbReference type="eggNOG" id="ENOG502QTFT">
    <property type="taxonomic scope" value="Eukaryota"/>
</dbReference>
<dbReference type="HOGENOM" id="CLU_023039_0_0_1"/>
<dbReference type="InParanoid" id="Q5RD97"/>
<dbReference type="OrthoDB" id="6105938at2759"/>
<dbReference type="TreeFam" id="TF329331"/>
<dbReference type="Proteomes" id="UP000001595">
    <property type="component" value="Chromosome 13"/>
</dbReference>
<dbReference type="GO" id="GO:0000785">
    <property type="term" value="C:chromatin"/>
    <property type="evidence" value="ECO:0000250"/>
    <property type="project" value="UniProtKB"/>
</dbReference>
<dbReference type="GO" id="GO:0003682">
    <property type="term" value="F:chromatin binding"/>
    <property type="evidence" value="ECO:0000250"/>
    <property type="project" value="UniProtKB"/>
</dbReference>
<dbReference type="GO" id="GO:0004842">
    <property type="term" value="F:ubiquitin-protein transferase activity"/>
    <property type="evidence" value="ECO:0000250"/>
    <property type="project" value="UniProtKB"/>
</dbReference>
<dbReference type="GO" id="GO:0008270">
    <property type="term" value="F:zinc ion binding"/>
    <property type="evidence" value="ECO:0007669"/>
    <property type="project" value="UniProtKB-KW"/>
</dbReference>
<dbReference type="GO" id="GO:0051865">
    <property type="term" value="P:protein autoubiquitination"/>
    <property type="evidence" value="ECO:0000250"/>
    <property type="project" value="UniProtKB"/>
</dbReference>
<dbReference type="GO" id="GO:0006513">
    <property type="term" value="P:protein monoubiquitination"/>
    <property type="evidence" value="ECO:0000250"/>
    <property type="project" value="UniProtKB"/>
</dbReference>
<dbReference type="GO" id="GO:0006275">
    <property type="term" value="P:regulation of DNA replication"/>
    <property type="evidence" value="ECO:0000250"/>
    <property type="project" value="UniProtKB"/>
</dbReference>
<dbReference type="CDD" id="cd16562">
    <property type="entry name" value="RING-HC_RNF219"/>
    <property type="match status" value="1"/>
</dbReference>
<dbReference type="Gene3D" id="3.30.40.10">
    <property type="entry name" value="Zinc/RING finger domain, C3HC4 (zinc finger)"/>
    <property type="match status" value="1"/>
</dbReference>
<dbReference type="InterPro" id="IPR039209">
    <property type="entry name" value="OBI1"/>
</dbReference>
<dbReference type="InterPro" id="IPR035691">
    <property type="entry name" value="OBI1_RING-HC"/>
</dbReference>
<dbReference type="InterPro" id="IPR001841">
    <property type="entry name" value="Znf_RING"/>
</dbReference>
<dbReference type="InterPro" id="IPR013083">
    <property type="entry name" value="Znf_RING/FYVE/PHD"/>
</dbReference>
<dbReference type="PANTHER" id="PTHR14609:SF1">
    <property type="entry name" value="ORC UBIQUITIN LIGASE 1"/>
    <property type="match status" value="1"/>
</dbReference>
<dbReference type="PANTHER" id="PTHR14609">
    <property type="entry name" value="RING FINGER PROTEIN 219"/>
    <property type="match status" value="1"/>
</dbReference>
<dbReference type="Pfam" id="PF13923">
    <property type="entry name" value="zf-C3HC4_2"/>
    <property type="match status" value="1"/>
</dbReference>
<dbReference type="SUPFAM" id="SSF57850">
    <property type="entry name" value="RING/U-box"/>
    <property type="match status" value="1"/>
</dbReference>
<dbReference type="PROSITE" id="PS50089">
    <property type="entry name" value="ZF_RING_2"/>
    <property type="match status" value="1"/>
</dbReference>
<accession>Q5RD97</accession>
<proteinExistence type="evidence at transcript level"/>
<name>OBI1_PONAB</name>
<comment type="function">
    <text evidence="1">E3 ubiquitin ligase essential for DNA replication origin activation during S phase. Acts as a replication origin selector which selects the origins to be fired and catalyzes the multi-mono-ubiquitination of a subset of chromatin-bound ORC3 and ORC5 during S-phase.</text>
</comment>
<comment type="catalytic activity">
    <reaction evidence="1">
        <text>S-ubiquitinyl-[E2 ubiquitin-conjugating enzyme]-L-cysteine + [acceptor protein]-L-lysine = [E2 ubiquitin-conjugating enzyme]-L-cysteine + N(6)-ubiquitinyl-[acceptor protein]-L-lysine.</text>
        <dbReference type="EC" id="2.3.2.27"/>
    </reaction>
</comment>
<comment type="subunit">
    <text evidence="1">Associates with ORC complex. Binds to chromatin; association is cell cycle-regulated, absent from mitotic chromosomes, is associated with chromatin from G1 and partially released from chromatin from mid S-phase.</text>
</comment>
<comment type="subcellular location">
    <subcellularLocation>
        <location evidence="1">Chromosome</location>
    </subcellularLocation>
    <text evidence="1">Association to chromatin is cell cycle-regulated, absent from mitotic chromosomes, is associated with chromatin from G1 and partially released from chromatin from mid S-phase.</text>
</comment>
<comment type="PTM">
    <text evidence="1">Auto-ubiquitinated.</text>
</comment>